<accession>B1ZGG2</accession>
<dbReference type="EMBL" id="CP001029">
    <property type="protein sequence ID" value="ACB79820.1"/>
    <property type="molecule type" value="Genomic_DNA"/>
</dbReference>
<dbReference type="RefSeq" id="WP_012453567.1">
    <property type="nucleotide sequence ID" value="NC_010725.1"/>
</dbReference>
<dbReference type="SMR" id="B1ZGG2"/>
<dbReference type="STRING" id="441620.Mpop_1656"/>
<dbReference type="KEGG" id="mpo:Mpop_1656"/>
<dbReference type="eggNOG" id="COG0445">
    <property type="taxonomic scope" value="Bacteria"/>
</dbReference>
<dbReference type="HOGENOM" id="CLU_007831_2_2_5"/>
<dbReference type="OrthoDB" id="9815560at2"/>
<dbReference type="Proteomes" id="UP000007136">
    <property type="component" value="Chromosome"/>
</dbReference>
<dbReference type="GO" id="GO:0005829">
    <property type="term" value="C:cytosol"/>
    <property type="evidence" value="ECO:0007669"/>
    <property type="project" value="TreeGrafter"/>
</dbReference>
<dbReference type="GO" id="GO:0050660">
    <property type="term" value="F:flavin adenine dinucleotide binding"/>
    <property type="evidence" value="ECO:0007669"/>
    <property type="project" value="UniProtKB-UniRule"/>
</dbReference>
<dbReference type="GO" id="GO:0030488">
    <property type="term" value="P:tRNA methylation"/>
    <property type="evidence" value="ECO:0007669"/>
    <property type="project" value="TreeGrafter"/>
</dbReference>
<dbReference type="GO" id="GO:0002098">
    <property type="term" value="P:tRNA wobble uridine modification"/>
    <property type="evidence" value="ECO:0007669"/>
    <property type="project" value="InterPro"/>
</dbReference>
<dbReference type="FunFam" id="3.50.50.60:FF:000145">
    <property type="entry name" value="tRNA uridine 5-carboxymethylaminomethyl modification enzyme"/>
    <property type="match status" value="1"/>
</dbReference>
<dbReference type="FunFam" id="1.10.150.570:FF:000001">
    <property type="entry name" value="tRNA uridine 5-carboxymethylaminomethyl modification enzyme MnmG"/>
    <property type="match status" value="1"/>
</dbReference>
<dbReference type="FunFam" id="3.50.50.60:FF:000002">
    <property type="entry name" value="tRNA uridine 5-carboxymethylaminomethyl modification enzyme MnmG"/>
    <property type="match status" value="1"/>
</dbReference>
<dbReference type="Gene3D" id="3.50.50.60">
    <property type="entry name" value="FAD/NAD(P)-binding domain"/>
    <property type="match status" value="2"/>
</dbReference>
<dbReference type="Gene3D" id="1.10.150.570">
    <property type="entry name" value="GidA associated domain, C-terminal subdomain"/>
    <property type="match status" value="1"/>
</dbReference>
<dbReference type="Gene3D" id="1.10.10.1800">
    <property type="entry name" value="tRNA uridine 5-carboxymethylaminomethyl modification enzyme MnmG/GidA"/>
    <property type="match status" value="1"/>
</dbReference>
<dbReference type="HAMAP" id="MF_00129">
    <property type="entry name" value="MnmG_GidA"/>
    <property type="match status" value="1"/>
</dbReference>
<dbReference type="InterPro" id="IPR036188">
    <property type="entry name" value="FAD/NAD-bd_sf"/>
</dbReference>
<dbReference type="InterPro" id="IPR049312">
    <property type="entry name" value="GIDA_C_N"/>
</dbReference>
<dbReference type="InterPro" id="IPR004416">
    <property type="entry name" value="MnmG"/>
</dbReference>
<dbReference type="InterPro" id="IPR002218">
    <property type="entry name" value="MnmG-rel"/>
</dbReference>
<dbReference type="InterPro" id="IPR020595">
    <property type="entry name" value="MnmG-rel_CS"/>
</dbReference>
<dbReference type="InterPro" id="IPR026904">
    <property type="entry name" value="MnmG_C"/>
</dbReference>
<dbReference type="InterPro" id="IPR047001">
    <property type="entry name" value="MnmG_C_subdom"/>
</dbReference>
<dbReference type="InterPro" id="IPR044920">
    <property type="entry name" value="MnmG_C_subdom_sf"/>
</dbReference>
<dbReference type="InterPro" id="IPR040131">
    <property type="entry name" value="MnmG_N"/>
</dbReference>
<dbReference type="NCBIfam" id="TIGR00136">
    <property type="entry name" value="mnmG_gidA"/>
    <property type="match status" value="1"/>
</dbReference>
<dbReference type="PANTHER" id="PTHR11806">
    <property type="entry name" value="GLUCOSE INHIBITED DIVISION PROTEIN A"/>
    <property type="match status" value="1"/>
</dbReference>
<dbReference type="PANTHER" id="PTHR11806:SF0">
    <property type="entry name" value="PROTEIN MTO1 HOMOLOG, MITOCHONDRIAL"/>
    <property type="match status" value="1"/>
</dbReference>
<dbReference type="Pfam" id="PF01134">
    <property type="entry name" value="GIDA"/>
    <property type="match status" value="1"/>
</dbReference>
<dbReference type="Pfam" id="PF21680">
    <property type="entry name" value="GIDA_C_1st"/>
    <property type="match status" value="1"/>
</dbReference>
<dbReference type="Pfam" id="PF13932">
    <property type="entry name" value="SAM_GIDA_C"/>
    <property type="match status" value="1"/>
</dbReference>
<dbReference type="PRINTS" id="PR00411">
    <property type="entry name" value="PNDRDTASEI"/>
</dbReference>
<dbReference type="SMART" id="SM01228">
    <property type="entry name" value="GIDA_assoc_3"/>
    <property type="match status" value="1"/>
</dbReference>
<dbReference type="SUPFAM" id="SSF51905">
    <property type="entry name" value="FAD/NAD(P)-binding domain"/>
    <property type="match status" value="1"/>
</dbReference>
<dbReference type="PROSITE" id="PS01280">
    <property type="entry name" value="GIDA_1"/>
    <property type="match status" value="1"/>
</dbReference>
<dbReference type="PROSITE" id="PS01281">
    <property type="entry name" value="GIDA_2"/>
    <property type="match status" value="1"/>
</dbReference>
<keyword id="KW-0963">Cytoplasm</keyword>
<keyword id="KW-0274">FAD</keyword>
<keyword id="KW-0285">Flavoprotein</keyword>
<keyword id="KW-0520">NAD</keyword>
<keyword id="KW-0819">tRNA processing</keyword>
<name>MNMG_METPB</name>
<comment type="function">
    <text evidence="1">NAD-binding protein involved in the addition of a carboxymethylaminomethyl (cmnm) group at the wobble position (U34) of certain tRNAs, forming tRNA-cmnm(5)s(2)U34.</text>
</comment>
<comment type="cofactor">
    <cofactor evidence="1">
        <name>FAD</name>
        <dbReference type="ChEBI" id="CHEBI:57692"/>
    </cofactor>
</comment>
<comment type="subunit">
    <text evidence="1">Homodimer. Heterotetramer of two MnmE and two MnmG subunits.</text>
</comment>
<comment type="subcellular location">
    <subcellularLocation>
        <location evidence="1">Cytoplasm</location>
    </subcellularLocation>
</comment>
<comment type="similarity">
    <text evidence="1">Belongs to the MnmG family.</text>
</comment>
<sequence>MHAESTRYDVIVVGGGHAGVEAAAAAARVGARTALVTHRAETIGTMSCNPAIGGLGKGHLVREVDALDGLMARVADAAGIQFRLLNRRKGPAVRGPRTQADRALYARAMQAAVAETPGLTVIEGEADDLIVEAGRVAGAMLADGRRLAAGAVVITTGTFLRGLIHIGERQIPAGRVGEEPALGLARTLDRHGFRLGRLKTGTPPRLDGRTIDWTALEMQHADADPVPFSTLTERITTPQIACGITRTTQRVHDLIRENLHRSPMYSGGISSRGPRYCPSIEDKVVRFGDREGHQIFLEPEGLDDPTVYPNGISTALPEVVQAGIIAAIPGLERTRILRPGYAIEYDYVDPRELDATLQTKRLPGLFLAGQINGTTGYEEAAGQGLVAGLNAARLAGASELAVFDRAESYLGVMIDDLVTHGVSEPYRMFTSRSEYRLSLRVDNADERLTPRGAALGCVGSIRAAHFAASQGALSEARTRLDTLSLTPNEAAAHGLALNRDGLRRTAFQLLSYPEIGWDRLAAIWPDLAAVPPRIAERLQTDATYAVYLDRQQADITAFRRDEAVRLPASLDYGTIAGLSNEMRVKLDGVRPTTLGQAARIEGVTPAALTLLAAHARRGRTQATA</sequence>
<feature type="chain" id="PRO_0000345299" description="tRNA uridine 5-carboxymethylaminomethyl modification enzyme MnmG">
    <location>
        <begin position="1"/>
        <end position="624"/>
    </location>
</feature>
<feature type="binding site" evidence="1">
    <location>
        <begin position="14"/>
        <end position="19"/>
    </location>
    <ligand>
        <name>FAD</name>
        <dbReference type="ChEBI" id="CHEBI:57692"/>
    </ligand>
</feature>
<feature type="binding site" evidence="1">
    <location>
        <begin position="273"/>
        <end position="287"/>
    </location>
    <ligand>
        <name>NAD(+)</name>
        <dbReference type="ChEBI" id="CHEBI:57540"/>
    </ligand>
</feature>
<organism>
    <name type="scientific">Methylorubrum populi (strain ATCC BAA-705 / NCIMB 13946 / BJ001)</name>
    <name type="common">Methylobacterium populi</name>
    <dbReference type="NCBI Taxonomy" id="441620"/>
    <lineage>
        <taxon>Bacteria</taxon>
        <taxon>Pseudomonadati</taxon>
        <taxon>Pseudomonadota</taxon>
        <taxon>Alphaproteobacteria</taxon>
        <taxon>Hyphomicrobiales</taxon>
        <taxon>Methylobacteriaceae</taxon>
        <taxon>Methylorubrum</taxon>
    </lineage>
</organism>
<reference key="1">
    <citation type="submission" date="2008-04" db="EMBL/GenBank/DDBJ databases">
        <title>Complete sequence of chromosome of Methylobacterium populi BJ001.</title>
        <authorList>
            <consortium name="US DOE Joint Genome Institute"/>
            <person name="Copeland A."/>
            <person name="Lucas S."/>
            <person name="Lapidus A."/>
            <person name="Glavina del Rio T."/>
            <person name="Dalin E."/>
            <person name="Tice H."/>
            <person name="Bruce D."/>
            <person name="Goodwin L."/>
            <person name="Pitluck S."/>
            <person name="Chertkov O."/>
            <person name="Brettin T."/>
            <person name="Detter J.C."/>
            <person name="Han C."/>
            <person name="Kuske C.R."/>
            <person name="Schmutz J."/>
            <person name="Larimer F."/>
            <person name="Land M."/>
            <person name="Hauser L."/>
            <person name="Kyrpides N."/>
            <person name="Mikhailova N."/>
            <person name="Marx C."/>
            <person name="Richardson P."/>
        </authorList>
    </citation>
    <scope>NUCLEOTIDE SEQUENCE [LARGE SCALE GENOMIC DNA]</scope>
    <source>
        <strain>ATCC BAA-705 / NCIMB 13946 / BJ001</strain>
    </source>
</reference>
<proteinExistence type="inferred from homology"/>
<gene>
    <name evidence="1" type="primary">mnmG</name>
    <name evidence="1" type="synonym">gidA</name>
    <name type="ordered locus">Mpop_1656</name>
</gene>
<evidence type="ECO:0000255" key="1">
    <source>
        <dbReference type="HAMAP-Rule" id="MF_00129"/>
    </source>
</evidence>
<protein>
    <recommendedName>
        <fullName evidence="1">tRNA uridine 5-carboxymethylaminomethyl modification enzyme MnmG</fullName>
    </recommendedName>
    <alternativeName>
        <fullName evidence="1">Glucose-inhibited division protein A</fullName>
    </alternativeName>
</protein>